<comment type="function">
    <text evidence="2">Component of the ubiquinol-cytochrome c reductase complex (complex III or cytochrome b-c1 complex) that is part of the mitochondrial respiratory chain. The b-c1 complex mediates electron transfer from ubiquinol to cytochrome c. Contributes to the generation of a proton gradient across the mitochondrial membrane that is then used for ATP synthesis.</text>
</comment>
<comment type="cofactor">
    <cofactor evidence="2">
        <name>heme b</name>
        <dbReference type="ChEBI" id="CHEBI:60344"/>
    </cofactor>
    <text evidence="2">Binds 2 heme b groups non-covalently.</text>
</comment>
<comment type="subunit">
    <text evidence="2">The cytochrome bc1 complex contains 3 respiratory subunits (MT-CYB, CYC1 and UQCRFS1), 2 core proteins (UQCRC1 and UQCRC2) and probably 6 low-molecular weight proteins.</text>
</comment>
<comment type="subcellular location">
    <subcellularLocation>
        <location evidence="2">Mitochondrion inner membrane</location>
        <topology evidence="2">Multi-pass membrane protein</topology>
    </subcellularLocation>
</comment>
<comment type="miscellaneous">
    <text evidence="1">Heme 1 (or BL or b562) is low-potential and absorbs at about 562 nm, and heme 2 (or BH or b566) is high-potential and absorbs at about 566 nm.</text>
</comment>
<comment type="similarity">
    <text evidence="3 4">Belongs to the cytochrome b family.</text>
</comment>
<comment type="caution">
    <text evidence="2">The full-length protein contains only eight transmembrane helices, not nine as predicted by bioinformatics tools.</text>
</comment>
<protein>
    <recommendedName>
        <fullName>Cytochrome b</fullName>
    </recommendedName>
    <alternativeName>
        <fullName>Complex III subunit 3</fullName>
    </alternativeName>
    <alternativeName>
        <fullName>Complex III subunit III</fullName>
    </alternativeName>
    <alternativeName>
        <fullName>Cytochrome b-c1 complex subunit 3</fullName>
    </alternativeName>
    <alternativeName>
        <fullName>Ubiquinol-cytochrome-c reductase complex cytochrome b subunit</fullName>
    </alternativeName>
</protein>
<sequence length="380" mass="42619">MASLRKTHPLIKIANDALVDLPAPSNISVWWNFGSLLGLCLITQILTGLFLAMHYTSDISTAFSSVAHICRDVNYGWLIRNIHANGASFFFICLYLHIARGLYYGSYLYKETWNIGVVLFLLVMMTAFVGYVLPWGQMSFWGATVITNLLSAVPYVGDMLVQWIWGGFSVDNATLTRFFAFHFLFPFIVAAVTILHLLFLHETGSNNPAGLNSDADKISFHPYFSYKDLLGFVVMLLGLTTLALFSPNLLGDPENFTPANPLVTPPHIKPEWYFLFAYAILRSIPNKLGGVLALLFSILVLMVVPVLHTSKQRGLTFRPATQFLFWTLVADMIILTWIGGMPVEHPYIIIGQIASILYFALFLILIPLAGWLENKALEWV</sequence>
<keyword id="KW-0249">Electron transport</keyword>
<keyword id="KW-0349">Heme</keyword>
<keyword id="KW-0408">Iron</keyword>
<keyword id="KW-0472">Membrane</keyword>
<keyword id="KW-0479">Metal-binding</keyword>
<keyword id="KW-0496">Mitochondrion</keyword>
<keyword id="KW-0999">Mitochondrion inner membrane</keyword>
<keyword id="KW-0679">Respiratory chain</keyword>
<keyword id="KW-0812">Transmembrane</keyword>
<keyword id="KW-1133">Transmembrane helix</keyword>
<keyword id="KW-0813">Transport</keyword>
<keyword id="KW-0830">Ubiquinone</keyword>
<accession>P34197</accession>
<gene>
    <name type="primary">mt-cyb</name>
    <name type="synonym">cob</name>
    <name type="synonym">cytb</name>
    <name type="synonym">mtcyb</name>
</gene>
<organism>
    <name type="scientific">Formosania lacustris</name>
    <name type="common">Oriental stream loach</name>
    <name type="synonym">Crossostoma lacustre</name>
    <dbReference type="NCBI Taxonomy" id="7980"/>
    <lineage>
        <taxon>Eukaryota</taxon>
        <taxon>Metazoa</taxon>
        <taxon>Chordata</taxon>
        <taxon>Craniata</taxon>
        <taxon>Vertebrata</taxon>
        <taxon>Euteleostomi</taxon>
        <taxon>Actinopterygii</taxon>
        <taxon>Neopterygii</taxon>
        <taxon>Teleostei</taxon>
        <taxon>Ostariophysi</taxon>
        <taxon>Cypriniformes</taxon>
        <taxon>Gastromyzontidae</taxon>
        <taxon>Formosania</taxon>
    </lineage>
</organism>
<evidence type="ECO:0000250" key="1"/>
<evidence type="ECO:0000250" key="2">
    <source>
        <dbReference type="UniProtKB" id="P00157"/>
    </source>
</evidence>
<evidence type="ECO:0000255" key="3">
    <source>
        <dbReference type="PROSITE-ProRule" id="PRU00967"/>
    </source>
</evidence>
<evidence type="ECO:0000255" key="4">
    <source>
        <dbReference type="PROSITE-ProRule" id="PRU00968"/>
    </source>
</evidence>
<dbReference type="EMBL" id="M91245">
    <property type="protein sequence ID" value="AAB96823.1"/>
    <property type="molecule type" value="Genomic_DNA"/>
</dbReference>
<dbReference type="PIR" id="S35473">
    <property type="entry name" value="S35473"/>
</dbReference>
<dbReference type="RefSeq" id="NP_008315.1">
    <property type="nucleotide sequence ID" value="NC_001727.1"/>
</dbReference>
<dbReference type="SMR" id="P34197"/>
<dbReference type="GeneID" id="807984"/>
<dbReference type="CTD" id="4519"/>
<dbReference type="GO" id="GO:0005743">
    <property type="term" value="C:mitochondrial inner membrane"/>
    <property type="evidence" value="ECO:0007669"/>
    <property type="project" value="UniProtKB-SubCell"/>
</dbReference>
<dbReference type="GO" id="GO:0045275">
    <property type="term" value="C:respiratory chain complex III"/>
    <property type="evidence" value="ECO:0007669"/>
    <property type="project" value="InterPro"/>
</dbReference>
<dbReference type="GO" id="GO:0046872">
    <property type="term" value="F:metal ion binding"/>
    <property type="evidence" value="ECO:0007669"/>
    <property type="project" value="UniProtKB-KW"/>
</dbReference>
<dbReference type="GO" id="GO:0008121">
    <property type="term" value="F:ubiquinol-cytochrome-c reductase activity"/>
    <property type="evidence" value="ECO:0007669"/>
    <property type="project" value="InterPro"/>
</dbReference>
<dbReference type="GO" id="GO:0006122">
    <property type="term" value="P:mitochondrial electron transport, ubiquinol to cytochrome c"/>
    <property type="evidence" value="ECO:0007669"/>
    <property type="project" value="TreeGrafter"/>
</dbReference>
<dbReference type="CDD" id="cd00290">
    <property type="entry name" value="cytochrome_b_C"/>
    <property type="match status" value="1"/>
</dbReference>
<dbReference type="CDD" id="cd00284">
    <property type="entry name" value="Cytochrome_b_N"/>
    <property type="match status" value="1"/>
</dbReference>
<dbReference type="FunFam" id="1.20.810.10:FF:000002">
    <property type="entry name" value="Cytochrome b"/>
    <property type="match status" value="1"/>
</dbReference>
<dbReference type="Gene3D" id="1.20.810.10">
    <property type="entry name" value="Cytochrome Bc1 Complex, Chain C"/>
    <property type="match status" value="1"/>
</dbReference>
<dbReference type="InterPro" id="IPR005798">
    <property type="entry name" value="Cyt_b/b6_C"/>
</dbReference>
<dbReference type="InterPro" id="IPR036150">
    <property type="entry name" value="Cyt_b/b6_C_sf"/>
</dbReference>
<dbReference type="InterPro" id="IPR005797">
    <property type="entry name" value="Cyt_b/b6_N"/>
</dbReference>
<dbReference type="InterPro" id="IPR027387">
    <property type="entry name" value="Cytb/b6-like_sf"/>
</dbReference>
<dbReference type="InterPro" id="IPR030689">
    <property type="entry name" value="Cytochrome_b"/>
</dbReference>
<dbReference type="InterPro" id="IPR048260">
    <property type="entry name" value="Cytochrome_b_C_euk/bac"/>
</dbReference>
<dbReference type="InterPro" id="IPR048259">
    <property type="entry name" value="Cytochrome_b_N_euk/bac"/>
</dbReference>
<dbReference type="InterPro" id="IPR016174">
    <property type="entry name" value="Di-haem_cyt_TM"/>
</dbReference>
<dbReference type="PANTHER" id="PTHR19271">
    <property type="entry name" value="CYTOCHROME B"/>
    <property type="match status" value="1"/>
</dbReference>
<dbReference type="PANTHER" id="PTHR19271:SF16">
    <property type="entry name" value="CYTOCHROME B"/>
    <property type="match status" value="1"/>
</dbReference>
<dbReference type="Pfam" id="PF00032">
    <property type="entry name" value="Cytochrom_B_C"/>
    <property type="match status" value="1"/>
</dbReference>
<dbReference type="Pfam" id="PF00033">
    <property type="entry name" value="Cytochrome_B"/>
    <property type="match status" value="1"/>
</dbReference>
<dbReference type="PIRSF" id="PIRSF038885">
    <property type="entry name" value="COB"/>
    <property type="match status" value="1"/>
</dbReference>
<dbReference type="SUPFAM" id="SSF81648">
    <property type="entry name" value="a domain/subunit of cytochrome bc1 complex (Ubiquinol-cytochrome c reductase)"/>
    <property type="match status" value="1"/>
</dbReference>
<dbReference type="SUPFAM" id="SSF81342">
    <property type="entry name" value="Transmembrane di-heme cytochromes"/>
    <property type="match status" value="1"/>
</dbReference>
<dbReference type="PROSITE" id="PS51003">
    <property type="entry name" value="CYTB_CTER"/>
    <property type="match status" value="1"/>
</dbReference>
<dbReference type="PROSITE" id="PS51002">
    <property type="entry name" value="CYTB_NTER"/>
    <property type="match status" value="1"/>
</dbReference>
<proteinExistence type="inferred from homology"/>
<feature type="chain" id="PRO_0000060828" description="Cytochrome b">
    <location>
        <begin position="1"/>
        <end position="380"/>
    </location>
</feature>
<feature type="transmembrane region" description="Helical" evidence="2">
    <location>
        <begin position="33"/>
        <end position="53"/>
    </location>
</feature>
<feature type="transmembrane region" description="Helical" evidence="2">
    <location>
        <begin position="77"/>
        <end position="98"/>
    </location>
</feature>
<feature type="transmembrane region" description="Helical" evidence="2">
    <location>
        <begin position="113"/>
        <end position="133"/>
    </location>
</feature>
<feature type="transmembrane region" description="Helical" evidence="2">
    <location>
        <begin position="178"/>
        <end position="198"/>
    </location>
</feature>
<feature type="transmembrane region" description="Helical" evidence="2">
    <location>
        <begin position="226"/>
        <end position="246"/>
    </location>
</feature>
<feature type="transmembrane region" description="Helical" evidence="2">
    <location>
        <begin position="288"/>
        <end position="308"/>
    </location>
</feature>
<feature type="transmembrane region" description="Helical" evidence="2">
    <location>
        <begin position="320"/>
        <end position="340"/>
    </location>
</feature>
<feature type="transmembrane region" description="Helical" evidence="2">
    <location>
        <begin position="347"/>
        <end position="367"/>
    </location>
</feature>
<feature type="binding site" description="axial binding residue" evidence="2">
    <location>
        <position position="83"/>
    </location>
    <ligand>
        <name>heme b</name>
        <dbReference type="ChEBI" id="CHEBI:60344"/>
        <label>b562</label>
    </ligand>
    <ligandPart>
        <name>Fe</name>
        <dbReference type="ChEBI" id="CHEBI:18248"/>
    </ligandPart>
</feature>
<feature type="binding site" description="axial binding residue" evidence="2">
    <location>
        <position position="97"/>
    </location>
    <ligand>
        <name>heme b</name>
        <dbReference type="ChEBI" id="CHEBI:60344"/>
        <label>b566</label>
    </ligand>
    <ligandPart>
        <name>Fe</name>
        <dbReference type="ChEBI" id="CHEBI:18248"/>
    </ligandPart>
</feature>
<feature type="binding site" description="axial binding residue" evidence="2">
    <location>
        <position position="182"/>
    </location>
    <ligand>
        <name>heme b</name>
        <dbReference type="ChEBI" id="CHEBI:60344"/>
        <label>b562</label>
    </ligand>
    <ligandPart>
        <name>Fe</name>
        <dbReference type="ChEBI" id="CHEBI:18248"/>
    </ligandPart>
</feature>
<feature type="binding site" description="axial binding residue" evidence="2">
    <location>
        <position position="196"/>
    </location>
    <ligand>
        <name>heme b</name>
        <dbReference type="ChEBI" id="CHEBI:60344"/>
        <label>b566</label>
    </ligand>
    <ligandPart>
        <name>Fe</name>
        <dbReference type="ChEBI" id="CHEBI:18248"/>
    </ligandPart>
</feature>
<feature type="binding site" evidence="2">
    <location>
        <position position="201"/>
    </location>
    <ligand>
        <name>a ubiquinone</name>
        <dbReference type="ChEBI" id="CHEBI:16389"/>
    </ligand>
</feature>
<reference key="1">
    <citation type="journal article" date="1992" name="Nucleic Acids Res.">
        <title>The complete nucleotide sequence of the Crossostoma lacustre mitochondrial genome: conservation and variations among vertebrates.</title>
        <authorList>
            <person name="Tzeng C.-S."/>
            <person name="Hui C.-F."/>
            <person name="Shen S.-C."/>
            <person name="Huang P.C."/>
        </authorList>
    </citation>
    <scope>NUCLEOTIDE SEQUENCE [GENOMIC DNA]</scope>
</reference>
<name>CYB_FORLA</name>
<geneLocation type="mitochondrion"/>